<comment type="function">
    <text evidence="1">Cleaves peptides in various proteins in a process that requires ATP hydrolysis. Has a chymotrypsin-like activity. Plays a major role in the degradation of misfolded proteins.</text>
</comment>
<comment type="catalytic activity">
    <reaction evidence="1">
        <text>Hydrolysis of proteins to small peptides in the presence of ATP and magnesium. alpha-casein is the usual test substrate. In the absence of ATP, only oligopeptides shorter than five residues are hydrolyzed (such as succinyl-Leu-Tyr-|-NHMec, and Leu-Tyr-Leu-|-Tyr-Trp, in which cleavage of the -Tyr-|-Leu- and -Tyr-|-Trp bonds also occurs).</text>
        <dbReference type="EC" id="3.4.21.92"/>
    </reaction>
</comment>
<comment type="subunit">
    <text evidence="1">Fourteen ClpP subunits assemble into 2 heptameric rings which stack back to back to give a disk-like structure with a central cavity, resembling the structure of eukaryotic proteasomes.</text>
</comment>
<comment type="subcellular location">
    <subcellularLocation>
        <location evidence="1">Cytoplasm</location>
    </subcellularLocation>
</comment>
<comment type="similarity">
    <text evidence="1">Belongs to the peptidase S14 family.</text>
</comment>
<proteinExistence type="inferred from homology"/>
<keyword id="KW-0963">Cytoplasm</keyword>
<keyword id="KW-0378">Hydrolase</keyword>
<keyword id="KW-0645">Protease</keyword>
<keyword id="KW-0720">Serine protease</keyword>
<gene>
    <name evidence="1" type="primary">clpP</name>
    <name type="ordered locus">BMA10229_A3348</name>
</gene>
<accession>A2SBG3</accession>
<dbReference type="EC" id="3.4.21.92" evidence="1"/>
<dbReference type="EMBL" id="CP000546">
    <property type="protein sequence ID" value="ABN03906.1"/>
    <property type="molecule type" value="Genomic_DNA"/>
</dbReference>
<dbReference type="RefSeq" id="WP_004193408.1">
    <property type="nucleotide sequence ID" value="NC_008836.1"/>
</dbReference>
<dbReference type="SMR" id="A2SBG3"/>
<dbReference type="MEROPS" id="S14.001"/>
<dbReference type="GeneID" id="92979196"/>
<dbReference type="KEGG" id="bml:BMA10229_A3348"/>
<dbReference type="HOGENOM" id="CLU_058707_3_2_4"/>
<dbReference type="Proteomes" id="UP000002283">
    <property type="component" value="Chromosome I"/>
</dbReference>
<dbReference type="GO" id="GO:0005737">
    <property type="term" value="C:cytoplasm"/>
    <property type="evidence" value="ECO:0007669"/>
    <property type="project" value="UniProtKB-SubCell"/>
</dbReference>
<dbReference type="GO" id="GO:0009368">
    <property type="term" value="C:endopeptidase Clp complex"/>
    <property type="evidence" value="ECO:0007669"/>
    <property type="project" value="TreeGrafter"/>
</dbReference>
<dbReference type="GO" id="GO:0004176">
    <property type="term" value="F:ATP-dependent peptidase activity"/>
    <property type="evidence" value="ECO:0007669"/>
    <property type="project" value="InterPro"/>
</dbReference>
<dbReference type="GO" id="GO:0051117">
    <property type="term" value="F:ATPase binding"/>
    <property type="evidence" value="ECO:0007669"/>
    <property type="project" value="TreeGrafter"/>
</dbReference>
<dbReference type="GO" id="GO:0004252">
    <property type="term" value="F:serine-type endopeptidase activity"/>
    <property type="evidence" value="ECO:0007669"/>
    <property type="project" value="UniProtKB-UniRule"/>
</dbReference>
<dbReference type="GO" id="GO:0006515">
    <property type="term" value="P:protein quality control for misfolded or incompletely synthesized proteins"/>
    <property type="evidence" value="ECO:0007669"/>
    <property type="project" value="TreeGrafter"/>
</dbReference>
<dbReference type="CDD" id="cd07017">
    <property type="entry name" value="S14_ClpP_2"/>
    <property type="match status" value="1"/>
</dbReference>
<dbReference type="FunFam" id="3.90.226.10:FF:000001">
    <property type="entry name" value="ATP-dependent Clp protease proteolytic subunit"/>
    <property type="match status" value="1"/>
</dbReference>
<dbReference type="Gene3D" id="3.90.226.10">
    <property type="entry name" value="2-enoyl-CoA Hydratase, Chain A, domain 1"/>
    <property type="match status" value="1"/>
</dbReference>
<dbReference type="HAMAP" id="MF_00444">
    <property type="entry name" value="ClpP"/>
    <property type="match status" value="1"/>
</dbReference>
<dbReference type="InterPro" id="IPR001907">
    <property type="entry name" value="ClpP"/>
</dbReference>
<dbReference type="InterPro" id="IPR029045">
    <property type="entry name" value="ClpP/crotonase-like_dom_sf"/>
</dbReference>
<dbReference type="InterPro" id="IPR023562">
    <property type="entry name" value="ClpP/TepA"/>
</dbReference>
<dbReference type="InterPro" id="IPR033135">
    <property type="entry name" value="ClpP_His_AS"/>
</dbReference>
<dbReference type="InterPro" id="IPR018215">
    <property type="entry name" value="ClpP_Ser_AS"/>
</dbReference>
<dbReference type="NCBIfam" id="TIGR00493">
    <property type="entry name" value="clpP"/>
    <property type="match status" value="1"/>
</dbReference>
<dbReference type="NCBIfam" id="NF001368">
    <property type="entry name" value="PRK00277.1"/>
    <property type="match status" value="1"/>
</dbReference>
<dbReference type="NCBIfam" id="NF009205">
    <property type="entry name" value="PRK12553.1"/>
    <property type="match status" value="1"/>
</dbReference>
<dbReference type="PANTHER" id="PTHR10381">
    <property type="entry name" value="ATP-DEPENDENT CLP PROTEASE PROTEOLYTIC SUBUNIT"/>
    <property type="match status" value="1"/>
</dbReference>
<dbReference type="PANTHER" id="PTHR10381:SF70">
    <property type="entry name" value="ATP-DEPENDENT CLP PROTEASE PROTEOLYTIC SUBUNIT"/>
    <property type="match status" value="1"/>
</dbReference>
<dbReference type="Pfam" id="PF00574">
    <property type="entry name" value="CLP_protease"/>
    <property type="match status" value="1"/>
</dbReference>
<dbReference type="PRINTS" id="PR00127">
    <property type="entry name" value="CLPPROTEASEP"/>
</dbReference>
<dbReference type="SUPFAM" id="SSF52096">
    <property type="entry name" value="ClpP/crotonase"/>
    <property type="match status" value="1"/>
</dbReference>
<dbReference type="PROSITE" id="PS00382">
    <property type="entry name" value="CLP_PROTEASE_HIS"/>
    <property type="match status" value="1"/>
</dbReference>
<dbReference type="PROSITE" id="PS00381">
    <property type="entry name" value="CLP_PROTEASE_SER"/>
    <property type="match status" value="1"/>
</dbReference>
<sequence>MINRAQLLDTLASQAPRDFEAQALGLVPIVVETSGRGERSYDIYSRLLKERIVFMVGEVNDQTANLVVAQLLFLESENPDKDISLYINSPGGSVSAGMAIYDTMQFVKPDVSTLCMGLAASMGAFLLASGAKGKRYALPNARVMIHQPLGGARGQASDIEIQAREILYLRDRLNHLLAHHTGQDVERIARDTDRDNFMSSEDAKAYGLIDHVSTKRP</sequence>
<organism>
    <name type="scientific">Burkholderia mallei (strain NCTC 10229)</name>
    <dbReference type="NCBI Taxonomy" id="412022"/>
    <lineage>
        <taxon>Bacteria</taxon>
        <taxon>Pseudomonadati</taxon>
        <taxon>Pseudomonadota</taxon>
        <taxon>Betaproteobacteria</taxon>
        <taxon>Burkholderiales</taxon>
        <taxon>Burkholderiaceae</taxon>
        <taxon>Burkholderia</taxon>
        <taxon>pseudomallei group</taxon>
    </lineage>
</organism>
<reference key="1">
    <citation type="journal article" date="2010" name="Genome Biol. Evol.">
        <title>Continuing evolution of Burkholderia mallei through genome reduction and large-scale rearrangements.</title>
        <authorList>
            <person name="Losada L."/>
            <person name="Ronning C.M."/>
            <person name="DeShazer D."/>
            <person name="Woods D."/>
            <person name="Fedorova N."/>
            <person name="Kim H.S."/>
            <person name="Shabalina S.A."/>
            <person name="Pearson T.R."/>
            <person name="Brinkac L."/>
            <person name="Tan P."/>
            <person name="Nandi T."/>
            <person name="Crabtree J."/>
            <person name="Badger J."/>
            <person name="Beckstrom-Sternberg S."/>
            <person name="Saqib M."/>
            <person name="Schutzer S.E."/>
            <person name="Keim P."/>
            <person name="Nierman W.C."/>
        </authorList>
    </citation>
    <scope>NUCLEOTIDE SEQUENCE [LARGE SCALE GENOMIC DNA]</scope>
    <source>
        <strain>NCTC 10229</strain>
    </source>
</reference>
<name>CLPP_BURM9</name>
<evidence type="ECO:0000255" key="1">
    <source>
        <dbReference type="HAMAP-Rule" id="MF_00444"/>
    </source>
</evidence>
<protein>
    <recommendedName>
        <fullName evidence="1">ATP-dependent Clp protease proteolytic subunit</fullName>
        <ecNumber evidence="1">3.4.21.92</ecNumber>
    </recommendedName>
    <alternativeName>
        <fullName evidence="1">Endopeptidase Clp</fullName>
    </alternativeName>
</protein>
<feature type="chain" id="PRO_1000026071" description="ATP-dependent Clp protease proteolytic subunit">
    <location>
        <begin position="1"/>
        <end position="217"/>
    </location>
</feature>
<feature type="active site" description="Nucleophile" evidence="1">
    <location>
        <position position="121"/>
    </location>
</feature>
<feature type="active site" evidence="1">
    <location>
        <position position="146"/>
    </location>
</feature>